<keyword id="KW-1217">Cell adhesion impairing toxin</keyword>
<keyword id="KW-0903">Direct protein sequencing</keyword>
<keyword id="KW-1015">Disulfide bond</keyword>
<keyword id="KW-1199">Hemostasis impairing toxin</keyword>
<keyword id="KW-1201">Platelet aggregation inhibiting toxin</keyword>
<keyword id="KW-0964">Secreted</keyword>
<keyword id="KW-0800">Toxin</keyword>
<comment type="function">
    <molecule>Disintegrin horridistatin-1</molecule>
    <text evidence="4">Inhibits ADP-induced platelet aggregation (IC(50) is 16.2 nM) by binding to alpha-IIb/beta-3 (ITGA2B/ITGB3).</text>
</comment>
<comment type="function">
    <molecule>Disintegrin horridistatin-2</molecule>
    <text evidence="4">Inhibits ADP-induced platelet aggregation (IC(50) is 16.2 nM) by binding to alpha-IIb/beta-3 (ITGA2B/ITGB3).</text>
</comment>
<comment type="subunit">
    <text evidence="1">Monomer (disintegrin).</text>
</comment>
<comment type="subcellular location">
    <subcellularLocation>
        <location evidence="4">Secreted</location>
    </subcellularLocation>
</comment>
<comment type="tissue specificity">
    <text evidence="7">Expressed by the venom gland.</text>
</comment>
<comment type="mass spectrometry">
    <molecule>Disintegrin horridistatin-2</molecule>
</comment>
<comment type="mass spectrometry">
    <molecule>Disintegrin horridistatin-1</molecule>
</comment>
<comment type="miscellaneous">
    <text>The disintegrin belongs to the medium disintegrin subfamily.</text>
</comment>
<comment type="similarity">
    <text evidence="6">Belongs to the venom metalloproteinase (M12B) family. P-II subfamily. P-IIa sub-subfamily.</text>
</comment>
<protein>
    <recommendedName>
        <fullName evidence="5">Disintegrin horridistatin-2</fullName>
    </recommendedName>
    <component>
        <recommendedName>
            <fullName evidence="5">Disintegrin horridistatin-1</fullName>
        </recommendedName>
    </component>
</protein>
<proteinExistence type="evidence at protein level"/>
<organism>
    <name type="scientific">Crotalus horridus</name>
    <name type="common">Timber rattlesnake</name>
    <dbReference type="NCBI Taxonomy" id="35024"/>
    <lineage>
        <taxon>Eukaryota</taxon>
        <taxon>Metazoa</taxon>
        <taxon>Chordata</taxon>
        <taxon>Craniata</taxon>
        <taxon>Vertebrata</taxon>
        <taxon>Euteleostomi</taxon>
        <taxon>Lepidosauria</taxon>
        <taxon>Squamata</taxon>
        <taxon>Bifurcata</taxon>
        <taxon>Unidentata</taxon>
        <taxon>Episquamata</taxon>
        <taxon>Toxicofera</taxon>
        <taxon>Serpentes</taxon>
        <taxon>Colubroidea</taxon>
        <taxon>Viperidae</taxon>
        <taxon>Crotalinae</taxon>
        <taxon>Crotalus</taxon>
    </lineage>
</organism>
<feature type="chain" id="PRO_0000345024" description="Disintegrin horridistatin-2" evidence="4">
    <location>
        <begin position="1"/>
        <end position="71"/>
    </location>
</feature>
<feature type="chain" id="PRO_0000345025" description="Disintegrin horridistatin-1" evidence="4">
    <location>
        <begin position="1"/>
        <end position="69"/>
    </location>
</feature>
<feature type="domain" description="Disintegrin" evidence="3">
    <location>
        <begin position="1"/>
        <end position="71"/>
    </location>
</feature>
<feature type="short sequence motif" description="Cell attachment site" evidence="3">
    <location>
        <begin position="49"/>
        <end position="51"/>
    </location>
</feature>
<feature type="disulfide bond" evidence="2">
    <location>
        <begin position="4"/>
        <end position="19"/>
    </location>
</feature>
<feature type="disulfide bond" evidence="2">
    <location>
        <begin position="6"/>
        <end position="14"/>
    </location>
</feature>
<feature type="disulfide bond" evidence="2">
    <location>
        <begin position="13"/>
        <end position="36"/>
    </location>
</feature>
<feature type="disulfide bond" evidence="2">
    <location>
        <begin position="27"/>
        <end position="33"/>
    </location>
</feature>
<feature type="disulfide bond" evidence="2">
    <location>
        <begin position="32"/>
        <end position="57"/>
    </location>
</feature>
<feature type="disulfide bond" evidence="2 3">
    <location>
        <begin position="45"/>
        <end position="64"/>
    </location>
</feature>
<name>VM212_CROHD</name>
<sequence>GEECDCGSPANPCCDAATCKLRPGAQCADGLCCDQCRFIKKGTVCRPARGDWNDDTCTGQSADCPRNGLYG</sequence>
<dbReference type="SMR" id="P0C7X6"/>
<dbReference type="GO" id="GO:0005576">
    <property type="term" value="C:extracellular region"/>
    <property type="evidence" value="ECO:0007669"/>
    <property type="project" value="UniProtKB-SubCell"/>
</dbReference>
<dbReference type="GO" id="GO:0005886">
    <property type="term" value="C:plasma membrane"/>
    <property type="evidence" value="ECO:0007669"/>
    <property type="project" value="TreeGrafter"/>
</dbReference>
<dbReference type="GO" id="GO:0090729">
    <property type="term" value="F:toxin activity"/>
    <property type="evidence" value="ECO:0007669"/>
    <property type="project" value="UniProtKB-KW"/>
</dbReference>
<dbReference type="FunFam" id="4.10.70.10:FF:000005">
    <property type="entry name" value="Zinc metalloproteinase/disintegrin"/>
    <property type="match status" value="1"/>
</dbReference>
<dbReference type="Gene3D" id="4.10.70.10">
    <property type="entry name" value="Disintegrin domain"/>
    <property type="match status" value="1"/>
</dbReference>
<dbReference type="InterPro" id="IPR018358">
    <property type="entry name" value="Disintegrin_CS"/>
</dbReference>
<dbReference type="InterPro" id="IPR001762">
    <property type="entry name" value="Disintegrin_dom"/>
</dbReference>
<dbReference type="InterPro" id="IPR036436">
    <property type="entry name" value="Disintegrin_dom_sf"/>
</dbReference>
<dbReference type="PANTHER" id="PTHR11905">
    <property type="entry name" value="ADAM A DISINTEGRIN AND METALLOPROTEASE DOMAIN"/>
    <property type="match status" value="1"/>
</dbReference>
<dbReference type="PANTHER" id="PTHR11905:SF32">
    <property type="entry name" value="DISINTEGRIN AND METALLOPROTEINASE DOMAIN-CONTAINING PROTEIN 28"/>
    <property type="match status" value="1"/>
</dbReference>
<dbReference type="Pfam" id="PF00200">
    <property type="entry name" value="Disintegrin"/>
    <property type="match status" value="1"/>
</dbReference>
<dbReference type="PRINTS" id="PR00289">
    <property type="entry name" value="DISINTEGRIN"/>
</dbReference>
<dbReference type="SMART" id="SM00050">
    <property type="entry name" value="DISIN"/>
    <property type="match status" value="1"/>
</dbReference>
<dbReference type="SUPFAM" id="SSF57552">
    <property type="entry name" value="Blood coagulation inhibitor (disintegrin)"/>
    <property type="match status" value="1"/>
</dbReference>
<dbReference type="PROSITE" id="PS00427">
    <property type="entry name" value="DISINTEGRIN_1"/>
    <property type="match status" value="1"/>
</dbReference>
<dbReference type="PROSITE" id="PS50214">
    <property type="entry name" value="DISINTEGRIN_2"/>
    <property type="match status" value="1"/>
</dbReference>
<reference key="1">
    <citation type="journal article" date="2005" name="Can. J. Chem.">
        <title>Characterization and identification of disintegrins in Crotalus horridus venom by liquid chromatography and tandem matrix-assisted laser desorption ionization quadrupole ion trap time-of-flight (MALDI-QIT-TOF) mass spectrometry.</title>
        <authorList>
            <person name="Galan J.A."/>
            <person name="Sanchez E.E."/>
            <person name="Bashir S."/>
            <person name="Perez J.C."/>
        </authorList>
    </citation>
    <scope>PROTEIN SEQUENCE</scope>
    <scope>FUNCTION</scope>
    <scope>MASS SPECTROMETRY</scope>
    <scope>SUBCELLULAR LOCATION</scope>
    <source>
        <tissue>Venom</tissue>
    </source>
</reference>
<evidence type="ECO:0000250" key="1"/>
<evidence type="ECO:0000250" key="2">
    <source>
        <dbReference type="UniProtKB" id="Q0NZX5"/>
    </source>
</evidence>
<evidence type="ECO:0000255" key="3">
    <source>
        <dbReference type="PROSITE-ProRule" id="PRU00068"/>
    </source>
</evidence>
<evidence type="ECO:0000269" key="4">
    <source ref="1"/>
</evidence>
<evidence type="ECO:0000303" key="5">
    <source ref="1"/>
</evidence>
<evidence type="ECO:0000305" key="6"/>
<evidence type="ECO:0000305" key="7">
    <source ref="1"/>
</evidence>
<accession>P0C7X6</accession>